<proteinExistence type="inferred from homology"/>
<name>LLDD_ALLAM</name>
<organism>
    <name type="scientific">Allorhizobium ampelinum (strain ATCC BAA-846 / DSM 112012 / S4)</name>
    <name type="common">Agrobacterium vitis (strain S4)</name>
    <dbReference type="NCBI Taxonomy" id="311402"/>
    <lineage>
        <taxon>Bacteria</taxon>
        <taxon>Pseudomonadati</taxon>
        <taxon>Pseudomonadota</taxon>
        <taxon>Alphaproteobacteria</taxon>
        <taxon>Hyphomicrobiales</taxon>
        <taxon>Rhizobiaceae</taxon>
        <taxon>Rhizobium/Agrobacterium group</taxon>
        <taxon>Allorhizobium</taxon>
        <taxon>Allorhizobium ampelinum</taxon>
    </lineage>
</organism>
<dbReference type="EC" id="1.1.-.-" evidence="1"/>
<dbReference type="EMBL" id="CP000634">
    <property type="protein sequence ID" value="ACM38563.1"/>
    <property type="molecule type" value="Genomic_DNA"/>
</dbReference>
<dbReference type="RefSeq" id="WP_012653805.1">
    <property type="nucleotide sequence ID" value="NC_011988.1"/>
</dbReference>
<dbReference type="SMR" id="B9K115"/>
<dbReference type="STRING" id="311402.Avi_5439"/>
<dbReference type="KEGG" id="avi:Avi_5439"/>
<dbReference type="eggNOG" id="COG1304">
    <property type="taxonomic scope" value="Bacteria"/>
</dbReference>
<dbReference type="HOGENOM" id="CLU_020639_0_0_5"/>
<dbReference type="Proteomes" id="UP000001596">
    <property type="component" value="Chromosome 2"/>
</dbReference>
<dbReference type="GO" id="GO:0005886">
    <property type="term" value="C:plasma membrane"/>
    <property type="evidence" value="ECO:0007669"/>
    <property type="project" value="UniProtKB-SubCell"/>
</dbReference>
<dbReference type="GO" id="GO:0010181">
    <property type="term" value="F:FMN binding"/>
    <property type="evidence" value="ECO:0007669"/>
    <property type="project" value="InterPro"/>
</dbReference>
<dbReference type="GO" id="GO:0004459">
    <property type="term" value="F:L-lactate dehydrogenase activity"/>
    <property type="evidence" value="ECO:0007669"/>
    <property type="project" value="UniProtKB-UniRule"/>
</dbReference>
<dbReference type="GO" id="GO:0009060">
    <property type="term" value="P:aerobic respiration"/>
    <property type="evidence" value="ECO:0007669"/>
    <property type="project" value="TreeGrafter"/>
</dbReference>
<dbReference type="GO" id="GO:0006089">
    <property type="term" value="P:lactate metabolic process"/>
    <property type="evidence" value="ECO:0007669"/>
    <property type="project" value="UniProtKB-UniRule"/>
</dbReference>
<dbReference type="CDD" id="cd02809">
    <property type="entry name" value="alpha_hydroxyacid_oxid_FMN"/>
    <property type="match status" value="1"/>
</dbReference>
<dbReference type="FunFam" id="3.20.20.70:FF:000029">
    <property type="entry name" value="L-lactate dehydrogenase"/>
    <property type="match status" value="1"/>
</dbReference>
<dbReference type="Gene3D" id="3.20.20.70">
    <property type="entry name" value="Aldolase class I"/>
    <property type="match status" value="1"/>
</dbReference>
<dbReference type="HAMAP" id="MF_01559">
    <property type="entry name" value="L_lact_dehydr"/>
    <property type="match status" value="1"/>
</dbReference>
<dbReference type="InterPro" id="IPR013785">
    <property type="entry name" value="Aldolase_TIM"/>
</dbReference>
<dbReference type="InterPro" id="IPR012133">
    <property type="entry name" value="Alpha-hydoxy_acid_DH_FMN"/>
</dbReference>
<dbReference type="InterPro" id="IPR000262">
    <property type="entry name" value="FMN-dep_DH"/>
</dbReference>
<dbReference type="InterPro" id="IPR037396">
    <property type="entry name" value="FMN_HAD"/>
</dbReference>
<dbReference type="InterPro" id="IPR008259">
    <property type="entry name" value="FMN_hydac_DH_AS"/>
</dbReference>
<dbReference type="InterPro" id="IPR020920">
    <property type="entry name" value="LldD"/>
</dbReference>
<dbReference type="NCBIfam" id="NF033901">
    <property type="entry name" value="L_lactate_LldD"/>
    <property type="match status" value="1"/>
</dbReference>
<dbReference type="NCBIfam" id="NF008398">
    <property type="entry name" value="PRK11197.1"/>
    <property type="match status" value="1"/>
</dbReference>
<dbReference type="PANTHER" id="PTHR10578:SF85">
    <property type="entry name" value="L-LACTATE DEHYDROGENASE"/>
    <property type="match status" value="1"/>
</dbReference>
<dbReference type="PANTHER" id="PTHR10578">
    <property type="entry name" value="S -2-HYDROXY-ACID OXIDASE-RELATED"/>
    <property type="match status" value="1"/>
</dbReference>
<dbReference type="Pfam" id="PF01070">
    <property type="entry name" value="FMN_dh"/>
    <property type="match status" value="1"/>
</dbReference>
<dbReference type="PIRSF" id="PIRSF000138">
    <property type="entry name" value="Al-hdrx_acd_dh"/>
    <property type="match status" value="1"/>
</dbReference>
<dbReference type="SUPFAM" id="SSF51395">
    <property type="entry name" value="FMN-linked oxidoreductases"/>
    <property type="match status" value="1"/>
</dbReference>
<dbReference type="PROSITE" id="PS00557">
    <property type="entry name" value="FMN_HYDROXY_ACID_DH_1"/>
    <property type="match status" value="1"/>
</dbReference>
<dbReference type="PROSITE" id="PS51349">
    <property type="entry name" value="FMN_HYDROXY_ACID_DH_2"/>
    <property type="match status" value="1"/>
</dbReference>
<feature type="chain" id="PRO_0000383412" description="L-lactate dehydrogenase">
    <location>
        <begin position="1"/>
        <end position="379"/>
    </location>
</feature>
<feature type="domain" description="FMN hydroxy acid dehydrogenase" evidence="1">
    <location>
        <begin position="1"/>
        <end position="379"/>
    </location>
</feature>
<feature type="active site" description="Proton acceptor" evidence="1">
    <location>
        <position position="275"/>
    </location>
</feature>
<feature type="binding site" evidence="1">
    <location>
        <position position="24"/>
    </location>
    <ligand>
        <name>substrate</name>
    </ligand>
</feature>
<feature type="binding site" evidence="1">
    <location>
        <position position="106"/>
    </location>
    <ligand>
        <name>FMN</name>
        <dbReference type="ChEBI" id="CHEBI:58210"/>
    </ligand>
</feature>
<feature type="binding site" evidence="1">
    <location>
        <position position="127"/>
    </location>
    <ligand>
        <name>FMN</name>
        <dbReference type="ChEBI" id="CHEBI:58210"/>
    </ligand>
</feature>
<feature type="binding site" evidence="1">
    <location>
        <position position="129"/>
    </location>
    <ligand>
        <name>substrate</name>
    </ligand>
</feature>
<feature type="binding site" evidence="1">
    <location>
        <position position="155"/>
    </location>
    <ligand>
        <name>FMN</name>
        <dbReference type="ChEBI" id="CHEBI:58210"/>
    </ligand>
</feature>
<feature type="binding site" evidence="1">
    <location>
        <position position="164"/>
    </location>
    <ligand>
        <name>substrate</name>
    </ligand>
</feature>
<feature type="binding site" evidence="1">
    <location>
        <position position="251"/>
    </location>
    <ligand>
        <name>FMN</name>
        <dbReference type="ChEBI" id="CHEBI:58210"/>
    </ligand>
</feature>
<feature type="binding site" evidence="1">
    <location>
        <position position="278"/>
    </location>
    <ligand>
        <name>substrate</name>
    </ligand>
</feature>
<feature type="binding site" evidence="1">
    <location>
        <begin position="306"/>
        <end position="330"/>
    </location>
    <ligand>
        <name>FMN</name>
        <dbReference type="ChEBI" id="CHEBI:58210"/>
    </ligand>
</feature>
<reference key="1">
    <citation type="journal article" date="2009" name="J. Bacteriol.">
        <title>Genome sequences of three Agrobacterium biovars help elucidate the evolution of multichromosome genomes in bacteria.</title>
        <authorList>
            <person name="Slater S.C."/>
            <person name="Goldman B.S."/>
            <person name="Goodner B."/>
            <person name="Setubal J.C."/>
            <person name="Farrand S.K."/>
            <person name="Nester E.W."/>
            <person name="Burr T.J."/>
            <person name="Banta L."/>
            <person name="Dickerman A.W."/>
            <person name="Paulsen I."/>
            <person name="Otten L."/>
            <person name="Suen G."/>
            <person name="Welch R."/>
            <person name="Almeida N.F."/>
            <person name="Arnold F."/>
            <person name="Burton O.T."/>
            <person name="Du Z."/>
            <person name="Ewing A."/>
            <person name="Godsy E."/>
            <person name="Heisel S."/>
            <person name="Houmiel K.L."/>
            <person name="Jhaveri J."/>
            <person name="Lu J."/>
            <person name="Miller N.M."/>
            <person name="Norton S."/>
            <person name="Chen Q."/>
            <person name="Phoolcharoen W."/>
            <person name="Ohlin V."/>
            <person name="Ondrusek D."/>
            <person name="Pride N."/>
            <person name="Stricklin S.L."/>
            <person name="Sun J."/>
            <person name="Wheeler C."/>
            <person name="Wilson L."/>
            <person name="Zhu H."/>
            <person name="Wood D.W."/>
        </authorList>
    </citation>
    <scope>NUCLEOTIDE SEQUENCE [LARGE SCALE GENOMIC DNA]</scope>
    <source>
        <strain>ATCC BAA-846 / DSM 112012 / S4</strain>
    </source>
</reference>
<keyword id="KW-0997">Cell inner membrane</keyword>
<keyword id="KW-1003">Cell membrane</keyword>
<keyword id="KW-0285">Flavoprotein</keyword>
<keyword id="KW-0288">FMN</keyword>
<keyword id="KW-0472">Membrane</keyword>
<keyword id="KW-0560">Oxidoreductase</keyword>
<keyword id="KW-1185">Reference proteome</keyword>
<comment type="function">
    <text evidence="1">Catalyzes the conversion of L-lactate to pyruvate. Is coupled to the respiratory chain.</text>
</comment>
<comment type="catalytic activity">
    <reaction evidence="1">
        <text>(S)-lactate + A = pyruvate + AH2</text>
        <dbReference type="Rhea" id="RHEA:45816"/>
        <dbReference type="ChEBI" id="CHEBI:13193"/>
        <dbReference type="ChEBI" id="CHEBI:15361"/>
        <dbReference type="ChEBI" id="CHEBI:16651"/>
        <dbReference type="ChEBI" id="CHEBI:17499"/>
    </reaction>
</comment>
<comment type="cofactor">
    <cofactor evidence="1">
        <name>FMN</name>
        <dbReference type="ChEBI" id="CHEBI:58210"/>
    </cofactor>
</comment>
<comment type="subcellular location">
    <subcellularLocation>
        <location evidence="1">Cell inner membrane</location>
        <topology evidence="1">Peripheral membrane protein</topology>
    </subcellularLocation>
</comment>
<comment type="similarity">
    <text evidence="1">Belongs to the FMN-dependent alpha-hydroxy acid dehydrogenase family.</text>
</comment>
<gene>
    <name evidence="1" type="primary">lldD</name>
    <name type="ordered locus">Avi_5439</name>
</gene>
<evidence type="ECO:0000255" key="1">
    <source>
        <dbReference type="HAMAP-Rule" id="MF_01559"/>
    </source>
</evidence>
<sequence length="379" mass="41207">MIISSSTDYREAARRRLPPFLFHYIDGGAYSEHTMRRNIDDLADLALRQRVLKSVGTVDISTTLFDEELAMPVVLAPVGLTGMYARRGEVQAARAAEKKGIPLTLSTVSVCPIEEVQAASNRPIWFQLYVLRDRGFMKNALERAWAAGIRKLVFTVDMPVPGARYRDAHSGMSGPNASLRRIIQAVMHPTWAIDVGLLGKPHDLGNVSAYRQQKTNLADYVGWLGENFDPSIGWKDLEWIRDFWKGPMIIKGILDPEDAKDAVRFGADGIIVSNHGGRQLDGVLSSARALPAIAAAVKGDLTILADSGIRSGLDVVRMIAQGADGVLIGRAFVYALAAAGQAGVENLLDLFAKEMRVAMTLTGARSIAEISPDSLVRGL</sequence>
<protein>
    <recommendedName>
        <fullName evidence="1">L-lactate dehydrogenase</fullName>
        <ecNumber evidence="1">1.1.-.-</ecNumber>
    </recommendedName>
</protein>
<accession>B9K115</accession>